<gene>
    <name evidence="1" type="primary">tfb</name>
    <name type="ordered locus">MTH_885</name>
</gene>
<feature type="chain" id="PRO_0000119323" description="Transcription initiation factor IIB">
    <location>
        <begin position="1"/>
        <end position="310"/>
    </location>
</feature>
<feature type="repeat" description="1">
    <location>
        <begin position="127"/>
        <end position="210"/>
    </location>
</feature>
<feature type="repeat" description="2">
    <location>
        <begin position="221"/>
        <end position="302"/>
    </location>
</feature>
<feature type="zinc finger region" description="TFIIB-type" evidence="2">
    <location>
        <begin position="9"/>
        <end position="41"/>
    </location>
</feature>
<feature type="binding site" evidence="2">
    <location>
        <position position="14"/>
    </location>
    <ligand>
        <name>Zn(2+)</name>
        <dbReference type="ChEBI" id="CHEBI:29105"/>
    </ligand>
</feature>
<feature type="binding site" evidence="2">
    <location>
        <position position="17"/>
    </location>
    <ligand>
        <name>Zn(2+)</name>
        <dbReference type="ChEBI" id="CHEBI:29105"/>
    </ligand>
</feature>
<feature type="binding site" evidence="2">
    <location>
        <position position="33"/>
    </location>
    <ligand>
        <name>Zn(2+)</name>
        <dbReference type="ChEBI" id="CHEBI:29105"/>
    </ligand>
</feature>
<feature type="binding site" evidence="2">
    <location>
        <position position="36"/>
    </location>
    <ligand>
        <name>Zn(2+)</name>
        <dbReference type="ChEBI" id="CHEBI:29105"/>
    </ligand>
</feature>
<name>TF2B_METTH</name>
<evidence type="ECO:0000255" key="1">
    <source>
        <dbReference type="HAMAP-Rule" id="MF_00383"/>
    </source>
</evidence>
<evidence type="ECO:0000255" key="2">
    <source>
        <dbReference type="PROSITE-ProRule" id="PRU00469"/>
    </source>
</evidence>
<protein>
    <recommendedName>
        <fullName evidence="1">Transcription initiation factor IIB</fullName>
        <shortName evidence="1">TFIIB</shortName>
    </recommendedName>
</protein>
<organism>
    <name type="scientific">Methanothermobacter thermautotrophicus (strain ATCC 29096 / DSM 1053 / JCM 10044 / NBRC 100330 / Delta H)</name>
    <name type="common">Methanobacterium thermoautotrophicum</name>
    <dbReference type="NCBI Taxonomy" id="187420"/>
    <lineage>
        <taxon>Archaea</taxon>
        <taxon>Methanobacteriati</taxon>
        <taxon>Methanobacteriota</taxon>
        <taxon>Methanomada group</taxon>
        <taxon>Methanobacteria</taxon>
        <taxon>Methanobacteriales</taxon>
        <taxon>Methanobacteriaceae</taxon>
        <taxon>Methanothermobacter</taxon>
    </lineage>
</organism>
<reference key="1">
    <citation type="journal article" date="1997" name="J. Bacteriol.">
        <title>Complete genome sequence of Methanobacterium thermoautotrophicum deltaH: functional analysis and comparative genomics.</title>
        <authorList>
            <person name="Smith D.R."/>
            <person name="Doucette-Stamm L.A."/>
            <person name="Deloughery C."/>
            <person name="Lee H.-M."/>
            <person name="Dubois J."/>
            <person name="Aldredge T."/>
            <person name="Bashirzadeh R."/>
            <person name="Blakely D."/>
            <person name="Cook R."/>
            <person name="Gilbert K."/>
            <person name="Harrison D."/>
            <person name="Hoang L."/>
            <person name="Keagle P."/>
            <person name="Lumm W."/>
            <person name="Pothier B."/>
            <person name="Qiu D."/>
            <person name="Spadafora R."/>
            <person name="Vicare R."/>
            <person name="Wang Y."/>
            <person name="Wierzbowski J."/>
            <person name="Gibson R."/>
            <person name="Jiwani N."/>
            <person name="Caruso A."/>
            <person name="Bush D."/>
            <person name="Safer H."/>
            <person name="Patwell D."/>
            <person name="Prabhakar S."/>
            <person name="McDougall S."/>
            <person name="Shimer G."/>
            <person name="Goyal A."/>
            <person name="Pietrovski S."/>
            <person name="Church G.M."/>
            <person name="Daniels C.J."/>
            <person name="Mao J.-I."/>
            <person name="Rice P."/>
            <person name="Noelling J."/>
            <person name="Reeve J.N."/>
        </authorList>
    </citation>
    <scope>NUCLEOTIDE SEQUENCE [LARGE SCALE GENOMIC DNA]</scope>
    <source>
        <strain>ATCC 29096 / DSM 1053 / JCM 10044 / NBRC 100330 / Delta H</strain>
    </source>
</reference>
<accession>O26971</accession>
<sequence length="310" mass="34890">MRSDVSEIEKETKCPECGSDDLRGDYERAEIVCGKCGLVIDDNLVDMGPEWRAFDHEQRDKRTRVGAPITYTIHDKGLSTMIDWRNKDIYGRDIPARNRAQWYRLRKWQRKIRISGATERNLAFALSELDRDSSRLGLPRSVREAASMVYRRAVENKLIRGRSIEGVVAASLYAACRKCNVPRTLDEIAEVSRVSKKEVGRTYRFLTRELNIKLPPTSPVDYVPRFASELGLSGEVQSKAIEIIEMAMENGLTSGRGPTGVAAAALYIASVLLGEHKTQRDVAEVAGVTEVTIRNRYKELTEQLDLGVTL</sequence>
<proteinExistence type="inferred from homology"/>
<comment type="function">
    <text evidence="1">Stabilizes TBP binding to an archaeal box-A promoter. Also responsible for recruiting RNA polymerase II to the pre-initiation complex (DNA-TBP-TFIIB).</text>
</comment>
<comment type="similarity">
    <text evidence="1">Belongs to the TFIIB family.</text>
</comment>
<keyword id="KW-0479">Metal-binding</keyword>
<keyword id="KW-1185">Reference proteome</keyword>
<keyword id="KW-0677">Repeat</keyword>
<keyword id="KW-0804">Transcription</keyword>
<keyword id="KW-0805">Transcription regulation</keyword>
<keyword id="KW-0862">Zinc</keyword>
<keyword id="KW-0863">Zinc-finger</keyword>
<dbReference type="EMBL" id="AE000666">
    <property type="protein sequence ID" value="AAB85383.1"/>
    <property type="molecule type" value="Genomic_DNA"/>
</dbReference>
<dbReference type="PIR" id="C69218">
    <property type="entry name" value="C69218"/>
</dbReference>
<dbReference type="RefSeq" id="WP_010876518.1">
    <property type="nucleotide sequence ID" value="NC_000916.1"/>
</dbReference>
<dbReference type="SMR" id="O26971"/>
<dbReference type="FunCoup" id="O26971">
    <property type="interactions" value="2"/>
</dbReference>
<dbReference type="STRING" id="187420.MTH_885"/>
<dbReference type="PaxDb" id="187420-MTH_885"/>
<dbReference type="EnsemblBacteria" id="AAB85383">
    <property type="protein sequence ID" value="AAB85383"/>
    <property type="gene ID" value="MTH_885"/>
</dbReference>
<dbReference type="GeneID" id="1471293"/>
<dbReference type="KEGG" id="mth:MTH_885"/>
<dbReference type="PATRIC" id="fig|187420.15.peg.870"/>
<dbReference type="HOGENOM" id="CLU_043736_0_1_2"/>
<dbReference type="InParanoid" id="O26971"/>
<dbReference type="Proteomes" id="UP000005223">
    <property type="component" value="Chromosome"/>
</dbReference>
<dbReference type="GO" id="GO:0097550">
    <property type="term" value="C:transcription preinitiation complex"/>
    <property type="evidence" value="ECO:0007669"/>
    <property type="project" value="TreeGrafter"/>
</dbReference>
<dbReference type="GO" id="GO:0003700">
    <property type="term" value="F:DNA-binding transcription factor activity"/>
    <property type="evidence" value="ECO:0007669"/>
    <property type="project" value="UniProtKB-UniRule"/>
</dbReference>
<dbReference type="GO" id="GO:0017025">
    <property type="term" value="F:TBP-class protein binding"/>
    <property type="evidence" value="ECO:0007669"/>
    <property type="project" value="InterPro"/>
</dbReference>
<dbReference type="GO" id="GO:0008270">
    <property type="term" value="F:zinc ion binding"/>
    <property type="evidence" value="ECO:0007669"/>
    <property type="project" value="UniProtKB-UniRule"/>
</dbReference>
<dbReference type="GO" id="GO:0070897">
    <property type="term" value="P:transcription preinitiation complex assembly"/>
    <property type="evidence" value="ECO:0007669"/>
    <property type="project" value="InterPro"/>
</dbReference>
<dbReference type="CDD" id="cd20549">
    <property type="entry name" value="CYCLIN_TFIIB_archaea_like_rpt1"/>
    <property type="match status" value="1"/>
</dbReference>
<dbReference type="CDD" id="cd20550">
    <property type="entry name" value="CYCLIN_TFIIB_archaea_like_rpt2"/>
    <property type="match status" value="1"/>
</dbReference>
<dbReference type="FunFam" id="1.10.472.10:FF:000023">
    <property type="entry name" value="Transcription initiation factor IIB"/>
    <property type="match status" value="1"/>
</dbReference>
<dbReference type="FunFam" id="1.10.472.170:FF:000001">
    <property type="entry name" value="Transcription initiation factor IIB"/>
    <property type="match status" value="1"/>
</dbReference>
<dbReference type="Gene3D" id="1.10.472.170">
    <property type="match status" value="1"/>
</dbReference>
<dbReference type="Gene3D" id="1.10.472.10">
    <property type="entry name" value="Cyclin-like"/>
    <property type="match status" value="1"/>
</dbReference>
<dbReference type="HAMAP" id="MF_00383">
    <property type="entry name" value="TF2B_arch"/>
    <property type="match status" value="1"/>
</dbReference>
<dbReference type="InterPro" id="IPR013763">
    <property type="entry name" value="Cyclin-like_dom"/>
</dbReference>
<dbReference type="InterPro" id="IPR036915">
    <property type="entry name" value="Cyclin-like_sf"/>
</dbReference>
<dbReference type="InterPro" id="IPR000812">
    <property type="entry name" value="TFIIB"/>
</dbReference>
<dbReference type="InterPro" id="IPR023484">
    <property type="entry name" value="TFIIB_arc"/>
</dbReference>
<dbReference type="InterPro" id="IPR023486">
    <property type="entry name" value="TFIIB_CS"/>
</dbReference>
<dbReference type="InterPro" id="IPR013150">
    <property type="entry name" value="TFIIB_cyclin"/>
</dbReference>
<dbReference type="InterPro" id="IPR013137">
    <property type="entry name" value="Znf_TFIIB"/>
</dbReference>
<dbReference type="NCBIfam" id="NF001658">
    <property type="entry name" value="PRK00423.1"/>
    <property type="match status" value="1"/>
</dbReference>
<dbReference type="PANTHER" id="PTHR11618:SF13">
    <property type="entry name" value="TRANSCRIPTION INITIATION FACTOR IIB"/>
    <property type="match status" value="1"/>
</dbReference>
<dbReference type="PANTHER" id="PTHR11618">
    <property type="entry name" value="TRANSCRIPTION INITIATION FACTOR IIB-RELATED"/>
    <property type="match status" value="1"/>
</dbReference>
<dbReference type="Pfam" id="PF00382">
    <property type="entry name" value="TFIIB"/>
    <property type="match status" value="2"/>
</dbReference>
<dbReference type="Pfam" id="PF08271">
    <property type="entry name" value="Zn_Ribbon_TF"/>
    <property type="match status" value="1"/>
</dbReference>
<dbReference type="PRINTS" id="PR00685">
    <property type="entry name" value="TIFACTORIIB"/>
</dbReference>
<dbReference type="SMART" id="SM00385">
    <property type="entry name" value="CYCLIN"/>
    <property type="match status" value="2"/>
</dbReference>
<dbReference type="SUPFAM" id="SSF47954">
    <property type="entry name" value="Cyclin-like"/>
    <property type="match status" value="2"/>
</dbReference>
<dbReference type="SUPFAM" id="SSF57783">
    <property type="entry name" value="Zinc beta-ribbon"/>
    <property type="match status" value="1"/>
</dbReference>
<dbReference type="PROSITE" id="PS00782">
    <property type="entry name" value="TFIIB"/>
    <property type="match status" value="2"/>
</dbReference>
<dbReference type="PROSITE" id="PS51134">
    <property type="entry name" value="ZF_TFIIB"/>
    <property type="match status" value="1"/>
</dbReference>